<accession>C4ZSW8</accession>
<dbReference type="EMBL" id="CP001396">
    <property type="protein sequence ID" value="ACR61802.1"/>
    <property type="molecule type" value="Genomic_DNA"/>
</dbReference>
<dbReference type="RefSeq" id="WP_000829818.1">
    <property type="nucleotide sequence ID" value="NC_012759.1"/>
</dbReference>
<dbReference type="SMR" id="C4ZSW8"/>
<dbReference type="GeneID" id="98390344"/>
<dbReference type="KEGG" id="ebw:BWG_2931"/>
<dbReference type="HOGENOM" id="CLU_046483_2_1_6"/>
<dbReference type="GO" id="GO:0022627">
    <property type="term" value="C:cytosolic small ribosomal subunit"/>
    <property type="evidence" value="ECO:0007669"/>
    <property type="project" value="TreeGrafter"/>
</dbReference>
<dbReference type="GO" id="GO:0003723">
    <property type="term" value="F:RNA binding"/>
    <property type="evidence" value="ECO:0007669"/>
    <property type="project" value="TreeGrafter"/>
</dbReference>
<dbReference type="GO" id="GO:0003735">
    <property type="term" value="F:structural constituent of ribosome"/>
    <property type="evidence" value="ECO:0007669"/>
    <property type="project" value="InterPro"/>
</dbReference>
<dbReference type="GO" id="GO:0006412">
    <property type="term" value="P:translation"/>
    <property type="evidence" value="ECO:0007669"/>
    <property type="project" value="UniProtKB-UniRule"/>
</dbReference>
<dbReference type="FunFam" id="3.30.230.10:FF:000001">
    <property type="entry name" value="30S ribosomal protein S9"/>
    <property type="match status" value="1"/>
</dbReference>
<dbReference type="Gene3D" id="3.30.230.10">
    <property type="match status" value="1"/>
</dbReference>
<dbReference type="HAMAP" id="MF_00532_B">
    <property type="entry name" value="Ribosomal_uS9_B"/>
    <property type="match status" value="1"/>
</dbReference>
<dbReference type="InterPro" id="IPR020568">
    <property type="entry name" value="Ribosomal_Su5_D2-typ_SF"/>
</dbReference>
<dbReference type="InterPro" id="IPR000754">
    <property type="entry name" value="Ribosomal_uS9"/>
</dbReference>
<dbReference type="InterPro" id="IPR023035">
    <property type="entry name" value="Ribosomal_uS9_bac/plastid"/>
</dbReference>
<dbReference type="InterPro" id="IPR020574">
    <property type="entry name" value="Ribosomal_uS9_CS"/>
</dbReference>
<dbReference type="InterPro" id="IPR014721">
    <property type="entry name" value="Ribsml_uS5_D2-typ_fold_subgr"/>
</dbReference>
<dbReference type="NCBIfam" id="NF001099">
    <property type="entry name" value="PRK00132.1"/>
    <property type="match status" value="1"/>
</dbReference>
<dbReference type="PANTHER" id="PTHR21569">
    <property type="entry name" value="RIBOSOMAL PROTEIN S9"/>
    <property type="match status" value="1"/>
</dbReference>
<dbReference type="PANTHER" id="PTHR21569:SF1">
    <property type="entry name" value="SMALL RIBOSOMAL SUBUNIT PROTEIN US9M"/>
    <property type="match status" value="1"/>
</dbReference>
<dbReference type="Pfam" id="PF00380">
    <property type="entry name" value="Ribosomal_S9"/>
    <property type="match status" value="1"/>
</dbReference>
<dbReference type="SUPFAM" id="SSF54211">
    <property type="entry name" value="Ribosomal protein S5 domain 2-like"/>
    <property type="match status" value="1"/>
</dbReference>
<dbReference type="PROSITE" id="PS00360">
    <property type="entry name" value="RIBOSOMAL_S9"/>
    <property type="match status" value="1"/>
</dbReference>
<feature type="chain" id="PRO_1000211831" description="Small ribosomal subunit protein uS9">
    <location>
        <begin position="1"/>
        <end position="130"/>
    </location>
</feature>
<protein>
    <recommendedName>
        <fullName evidence="1">Small ribosomal subunit protein uS9</fullName>
    </recommendedName>
    <alternativeName>
        <fullName evidence="2">30S ribosomal protein S9</fullName>
    </alternativeName>
</protein>
<comment type="similarity">
    <text evidence="1">Belongs to the universal ribosomal protein uS9 family.</text>
</comment>
<reference key="1">
    <citation type="journal article" date="2009" name="J. Bacteriol.">
        <title>Genomic sequencing reveals regulatory mutations and recombinational events in the widely used MC4100 lineage of Escherichia coli K-12.</title>
        <authorList>
            <person name="Ferenci T."/>
            <person name="Zhou Z."/>
            <person name="Betteridge T."/>
            <person name="Ren Y."/>
            <person name="Liu Y."/>
            <person name="Feng L."/>
            <person name="Reeves P.R."/>
            <person name="Wang L."/>
        </authorList>
    </citation>
    <scope>NUCLEOTIDE SEQUENCE [LARGE SCALE GENOMIC DNA]</scope>
    <source>
        <strain>K12 / MC4100 / BW2952</strain>
    </source>
</reference>
<organism>
    <name type="scientific">Escherichia coli (strain K12 / MC4100 / BW2952)</name>
    <dbReference type="NCBI Taxonomy" id="595496"/>
    <lineage>
        <taxon>Bacteria</taxon>
        <taxon>Pseudomonadati</taxon>
        <taxon>Pseudomonadota</taxon>
        <taxon>Gammaproteobacteria</taxon>
        <taxon>Enterobacterales</taxon>
        <taxon>Enterobacteriaceae</taxon>
        <taxon>Escherichia</taxon>
    </lineage>
</organism>
<sequence>MAENQYYGTGRRKSSAARVFIKPGNGKIVINQRSLEQYFGRETARMVVRQPLELVDMVEKLDLYITVKGGGISGQAGAIRHGITRALMEYDESLRSELRKAGFVTRDARQVERKKVGLRKARRRPQFSKR</sequence>
<gene>
    <name evidence="1" type="primary">rpsI</name>
    <name type="ordered locus">BWG_2931</name>
</gene>
<evidence type="ECO:0000255" key="1">
    <source>
        <dbReference type="HAMAP-Rule" id="MF_00532"/>
    </source>
</evidence>
<evidence type="ECO:0000305" key="2"/>
<name>RS9_ECOBW</name>
<proteinExistence type="inferred from homology"/>
<keyword id="KW-0687">Ribonucleoprotein</keyword>
<keyword id="KW-0689">Ribosomal protein</keyword>